<organism>
    <name type="scientific">Xibalbanus tulumensis</name>
    <name type="common">Blind cave remipede</name>
    <name type="synonym">Speleonectes tulumensis</name>
    <dbReference type="NCBI Taxonomy" id="1519145"/>
    <lineage>
        <taxon>Eukaryota</taxon>
        <taxon>Metazoa</taxon>
        <taxon>Ecdysozoa</taxon>
        <taxon>Arthropoda</taxon>
        <taxon>Crustacea</taxon>
        <taxon>Remipedia</taxon>
        <taxon>Nectiopoda</taxon>
        <taxon>Speleonectidae</taxon>
        <taxon>Xibalbanus</taxon>
    </lineage>
</organism>
<sequence>MKEANTRRYIYLCLVVVLLSIIITTEAEDDRLFCIRHHKYCGHRPKRCCSGLFCRCNTFGTNCRCQSKGALGKLI</sequence>
<accession>P0DRI9</accession>
<reference key="1">
    <citation type="journal article" date="2017" name="Toxins">
        <title>Venomics of remipede crustaceans reveals novel peptide diversity and illuminates the venom's biological role.</title>
        <authorList>
            <person name="von Reumont B.M."/>
            <person name="Undheim E.A.B."/>
            <person name="Jauss R.T."/>
            <person name="Jenner R.A."/>
        </authorList>
    </citation>
    <scope>NUCLEOTIDE SEQUENCE [LARGE SCALE MRNA]</scope>
    <scope>TISSUE SPECIFICITY</scope>
    <source>
        <tissue>Venom gland</tissue>
    </source>
</reference>
<reference key="2">
    <citation type="journal article" date="2024" name="BMC Biol.">
        <title>Diversely evolved xibalbin variants from remipede venom inhibit potassium channels and activate PKA-II and Erk1/2 signaling.</title>
        <authorList>
            <person name="Pinheiro-Junior E.L."/>
            <person name="Alirahimi E."/>
            <person name="Peigneur S."/>
            <person name="Isensee J."/>
            <person name="Schiffmann S."/>
            <person name="Erkoc P."/>
            <person name="Fuerst R."/>
            <person name="Vilcinskas A."/>
            <person name="Sennoner T."/>
            <person name="Koludarov I."/>
            <person name="Hempel B.F."/>
            <person name="Tytgat J."/>
            <person name="Hucho T."/>
            <person name="von Reumont B.M."/>
        </authorList>
    </citation>
    <scope>FUNCTION</scope>
    <scope>SYNTHESIS OF 31-75</scope>
</reference>
<feature type="signal peptide" evidence="2">
    <location>
        <begin position="1"/>
        <end position="27"/>
    </location>
</feature>
<feature type="propeptide" id="PRO_0000462236" evidence="7">
    <location>
        <begin position="28"/>
        <end position="30"/>
    </location>
</feature>
<feature type="chain" id="PRO_0000462237" description="Xibalbin-13 2" evidence="8">
    <location>
        <begin position="31"/>
        <end position="75"/>
    </location>
</feature>
<feature type="disulfide bond" evidence="1">
    <location>
        <begin position="34"/>
        <end position="49"/>
    </location>
</feature>
<feature type="disulfide bond" evidence="1">
    <location>
        <begin position="41"/>
        <end position="54"/>
    </location>
</feature>
<feature type="disulfide bond" evidence="1">
    <location>
        <begin position="48"/>
        <end position="65"/>
    </location>
</feature>
<feature type="disulfide bond" evidence="1">
    <location>
        <begin position="56"/>
        <end position="63"/>
    </location>
</feature>
<protein>
    <recommendedName>
        <fullName evidence="5 6 7">Xibalbin-13 2</fullName>
        <shortName evidence="6 7">Xib13 2</shortName>
    </recommendedName>
    <alternativeName>
        <fullName evidence="7">Kappa-speleotoxin(13)-Xt1b</fullName>
        <shortName evidence="7">Kappa-SLTX(13)-Xt1b</shortName>
    </alternativeName>
</protein>
<name>XIBD2_XIBTU</name>
<comment type="function">
    <text evidence="4">Probable neurotoxin. Strongly inhibits voltage-gated potassium channels (Kv1.1/KCNA1, Kv1.2/KCNA2, Kv1.3/KCNA3, and Kv1.6/KCNA6, with the highest toxicity against Kv1.1 (85.1% inhibition at 1 uM)) and mildly inhibits sodium channels (Nav1.2/SCN2A, Nav1.4/SCN4A, Nav1.5/SCN5A, Nav1.6/SCN8A, and BgNav). Induces activation of protein kinase A type II (PKA-II) and MAP kinase Erk1/2 in primary nociceptive and non-nociceptive sensory neurons. Does not show cytotoxic activity. Does not have an impact on Ca2+, cAMP, and NO signaling in the cell types analyzed. Does not interfere with the adhesion of leukocytes to endothelial cells.</text>
</comment>
<comment type="subcellular location">
    <subcellularLocation>
        <location evidence="8">Secreted</location>
    </subcellularLocation>
</comment>
<comment type="tissue specificity">
    <text evidence="3">Expressed by the venom gland and the whole body.</text>
</comment>
<comment type="domain">
    <text evidence="7">The presence of a 'disulfide through disulfide knot' structurally defines this protein as a knottin.</text>
</comment>
<comment type="miscellaneous">
    <text evidence="4">Negative results: Does not show activity on potassium channels Shaker, Kv1.4/KCNA4, Kv2.1/KCNB1, Kv3.1/KCNC1, Kv4.2/KCND2, Kv10.1/KCNH1/EAG1, Kv11.1/KCNH2/ERG1, and calcium channels Cav3.1/CACNA1G, Cav3.2/CACNA1H and Cav3.3/CACNA1I.</text>
</comment>
<comment type="similarity">
    <text evidence="7">Belongs to the xibalbin-13 family.</text>
</comment>
<comment type="online information" name="National Center for Biotechnology Information (NCBI)">
    <link uri="https://www.ncbi.nlm.nih.gov/sra/SRX2766574"/>
</comment>
<proteinExistence type="evidence at transcript level"/>
<gene>
    <name evidence="6" type="ORF">c27367_g1_i1_2</name>
</gene>
<keyword id="KW-1015">Disulfide bond</keyword>
<keyword id="KW-0872">Ion channel impairing toxin</keyword>
<keyword id="KW-0528">Neurotoxin</keyword>
<keyword id="KW-0632">Potassium channel impairing toxin</keyword>
<keyword id="KW-0964">Secreted</keyword>
<keyword id="KW-0732">Signal</keyword>
<keyword id="KW-0800">Toxin</keyword>
<keyword id="KW-1220">Voltage-gated potassium channel impairing toxin</keyword>
<keyword id="KW-0738">Voltage-gated sodium channel impairing toxin</keyword>
<evidence type="ECO:0000250" key="1">
    <source>
        <dbReference type="UniProtKB" id="B3EWH0"/>
    </source>
</evidence>
<evidence type="ECO:0000255" key="2"/>
<evidence type="ECO:0000269" key="3">
    <source>
    </source>
</evidence>
<evidence type="ECO:0000269" key="4">
    <source>
    </source>
</evidence>
<evidence type="ECO:0000303" key="5">
    <source>
    </source>
</evidence>
<evidence type="ECO:0000303" key="6">
    <source>
    </source>
</evidence>
<evidence type="ECO:0000305" key="7"/>
<evidence type="ECO:0000305" key="8">
    <source>
    </source>
</evidence>